<comment type="subunit">
    <text evidence="1">Tetramer, composed of 2 regulatory (R) and 2 catalytic (C) subunits. In the presence of cAMP it dissociates into 2 active monomeric C subunits and an R dimer (By similarity).</text>
</comment>
<comment type="similarity">
    <text evidence="4">Belongs to the cAMP-dependent kinase regulatory chain family.</text>
</comment>
<comment type="sequence caution" evidence="4">
    <conflict type="frameshift">
        <sequence resource="EMBL-CDS" id="AAA57470"/>
    </conflict>
</comment>
<gene>
    <name type="primary">PKAR</name>
    <name type="synonym">UAC1</name>
    <name type="synonym">UBC1</name>
    <name type="ORF">UMAG_06450</name>
</gene>
<reference key="1">
    <citation type="journal article" date="1994" name="Genes Dev.">
        <title>cAMP regulates morphogenesis in the fungal pathogen Ustilago maydis.</title>
        <authorList>
            <person name="Gold S."/>
            <person name="Duncan G."/>
            <person name="Barrett K."/>
            <person name="Kronstad J.W."/>
        </authorList>
    </citation>
    <scope>NUCLEOTIDE SEQUENCE [GENOMIC DNA]</scope>
    <source>
        <strain>518</strain>
    </source>
</reference>
<reference key="2">
    <citation type="journal article" date="2006" name="Nature">
        <title>Insights from the genome of the biotrophic fungal plant pathogen Ustilago maydis.</title>
        <authorList>
            <person name="Kaemper J."/>
            <person name="Kahmann R."/>
            <person name="Boelker M."/>
            <person name="Ma L.-J."/>
            <person name="Brefort T."/>
            <person name="Saville B.J."/>
            <person name="Banuett F."/>
            <person name="Kronstad J.W."/>
            <person name="Gold S.E."/>
            <person name="Mueller O."/>
            <person name="Perlin M.H."/>
            <person name="Woesten H.A.B."/>
            <person name="de Vries R."/>
            <person name="Ruiz-Herrera J."/>
            <person name="Reynaga-Pena C.G."/>
            <person name="Snetselaar K."/>
            <person name="McCann M."/>
            <person name="Perez-Martin J."/>
            <person name="Feldbruegge M."/>
            <person name="Basse C.W."/>
            <person name="Steinberg G."/>
            <person name="Ibeas J.I."/>
            <person name="Holloman W."/>
            <person name="Guzman P."/>
            <person name="Farman M.L."/>
            <person name="Stajich J.E."/>
            <person name="Sentandreu R."/>
            <person name="Gonzalez-Prieto J.M."/>
            <person name="Kennell J.C."/>
            <person name="Molina L."/>
            <person name="Schirawski J."/>
            <person name="Mendoza-Mendoza A."/>
            <person name="Greilinger D."/>
            <person name="Muench K."/>
            <person name="Roessel N."/>
            <person name="Scherer M."/>
            <person name="Vranes M."/>
            <person name="Ladendorf O."/>
            <person name="Vincon V."/>
            <person name="Fuchs U."/>
            <person name="Sandrock B."/>
            <person name="Meng S."/>
            <person name="Ho E.C.H."/>
            <person name="Cahill M.J."/>
            <person name="Boyce K.J."/>
            <person name="Klose J."/>
            <person name="Klosterman S.J."/>
            <person name="Deelstra H.J."/>
            <person name="Ortiz-Castellanos L."/>
            <person name="Li W."/>
            <person name="Sanchez-Alonso P."/>
            <person name="Schreier P.H."/>
            <person name="Haeuser-Hahn I."/>
            <person name="Vaupel M."/>
            <person name="Koopmann E."/>
            <person name="Friedrich G."/>
            <person name="Voss H."/>
            <person name="Schlueter T."/>
            <person name="Margolis J."/>
            <person name="Platt D."/>
            <person name="Swimmer C."/>
            <person name="Gnirke A."/>
            <person name="Chen F."/>
            <person name="Vysotskaia V."/>
            <person name="Mannhaupt G."/>
            <person name="Gueldener U."/>
            <person name="Muensterkoetter M."/>
            <person name="Haase D."/>
            <person name="Oesterheld M."/>
            <person name="Mewes H.-W."/>
            <person name="Mauceli E.W."/>
            <person name="DeCaprio D."/>
            <person name="Wade C.M."/>
            <person name="Butler J."/>
            <person name="Young S.K."/>
            <person name="Jaffe D.B."/>
            <person name="Calvo S.E."/>
            <person name="Nusbaum C."/>
            <person name="Galagan J.E."/>
            <person name="Birren B.W."/>
        </authorList>
    </citation>
    <scope>NUCLEOTIDE SEQUENCE [LARGE SCALE GENOMIC DNA]</scope>
    <source>
        <strain>DSM 14603 / FGSC 9021 / UM521</strain>
    </source>
</reference>
<reference key="3">
    <citation type="submission" date="2014-09" db="EMBL/GenBank/DDBJ databases">
        <authorList>
            <person name="Gueldener U."/>
            <person name="Muensterkoetter M."/>
            <person name="Walter M.C."/>
            <person name="Mannhaupt G."/>
            <person name="Kahmann R."/>
        </authorList>
    </citation>
    <scope>GENOME REANNOTATION</scope>
    <source>
        <strain>DSM 14603 / FGSC 9021 / UM521</strain>
    </source>
</reference>
<feature type="chain" id="PRO_0000205416" description="cAMP-dependent protein kinase regulatory subunit">
    <location>
        <begin position="1"/>
        <end position="525"/>
    </location>
</feature>
<feature type="region of interest" description="Dimerization and phosphorylation" evidence="2">
    <location>
        <begin position="28"/>
        <end position="213"/>
    </location>
</feature>
<feature type="region of interest" description="Disordered" evidence="3">
    <location>
        <begin position="114"/>
        <end position="146"/>
    </location>
</feature>
<feature type="region of interest" description="Disordered" evidence="3">
    <location>
        <begin position="170"/>
        <end position="196"/>
    </location>
</feature>
<feature type="region of interest" description="Disordered" evidence="3">
    <location>
        <begin position="497"/>
        <end position="525"/>
    </location>
</feature>
<feature type="compositionally biased region" description="Low complexity" evidence="3">
    <location>
        <begin position="124"/>
        <end position="146"/>
    </location>
</feature>
<feature type="binding site">
    <location>
        <begin position="214"/>
        <end position="345"/>
    </location>
    <ligand>
        <name>a nucleoside 3',5'-cyclic phosphate</name>
        <dbReference type="ChEBI" id="CHEBI:58464"/>
        <label>1</label>
    </ligand>
</feature>
<feature type="binding site" evidence="1">
    <location>
        <position position="295"/>
    </location>
    <ligand>
        <name>3',5'-cyclic AMP</name>
        <dbReference type="ChEBI" id="CHEBI:58165"/>
        <label>1</label>
    </ligand>
</feature>
<feature type="binding site" evidence="1">
    <location>
        <position position="304"/>
    </location>
    <ligand>
        <name>3',5'-cyclic AMP</name>
        <dbReference type="ChEBI" id="CHEBI:58165"/>
        <label>1</label>
    </ligand>
</feature>
<feature type="binding site">
    <location>
        <begin position="348"/>
        <end position="472"/>
    </location>
    <ligand>
        <name>a nucleoside 3',5'-cyclic phosphate</name>
        <dbReference type="ChEBI" id="CHEBI:58464"/>
        <label>2</label>
    </ligand>
</feature>
<feature type="binding site" evidence="1">
    <location>
        <position position="417"/>
    </location>
    <ligand>
        <name>3',5'-cyclic AMP</name>
        <dbReference type="ChEBI" id="CHEBI:58165"/>
        <label>2</label>
    </ligand>
</feature>
<feature type="modified residue" description="Phosphoserine; by autocatalysis" evidence="1">
    <location>
        <position position="170"/>
    </location>
</feature>
<feature type="sequence conflict" description="In Ref. 1; AAA57470." evidence="4" ref="1">
    <original>A</original>
    <variation>E</variation>
    <location>
        <position position="44"/>
    </location>
</feature>
<feature type="sequence conflict" description="In Ref. 1; AAA57470." evidence="4" ref="1">
    <original>SA</original>
    <variation>Q</variation>
    <location>
        <begin position="179"/>
        <end position="180"/>
    </location>
</feature>
<feature type="sequence conflict" description="In Ref. 1; AAA57470." evidence="4" ref="1">
    <original>APR</original>
    <variation>RC</variation>
    <location>
        <begin position="424"/>
        <end position="426"/>
    </location>
</feature>
<feature type="sequence conflict" description="In Ref. 1; AAA57470." evidence="4" ref="1">
    <original>S</original>
    <variation>T</variation>
    <location>
        <position position="488"/>
    </location>
</feature>
<proteinExistence type="inferred from homology"/>
<dbReference type="EMBL" id="L33917">
    <property type="protein sequence ID" value="AAA57470.1"/>
    <property type="status" value="ALT_FRAME"/>
    <property type="molecule type" value="Genomic_DNA"/>
</dbReference>
<dbReference type="EMBL" id="CM003162">
    <property type="protein sequence ID" value="KIS65747.1"/>
    <property type="molecule type" value="Genomic_DNA"/>
</dbReference>
<dbReference type="PIR" id="B55481">
    <property type="entry name" value="B55481"/>
</dbReference>
<dbReference type="RefSeq" id="XP_011392721.1">
    <property type="nucleotide sequence ID" value="XM_011394419.1"/>
</dbReference>
<dbReference type="SMR" id="P49605"/>
<dbReference type="FunCoup" id="P49605">
    <property type="interactions" value="264"/>
</dbReference>
<dbReference type="STRING" id="237631.P49605"/>
<dbReference type="EnsemblFungi" id="KIS65747">
    <property type="protein sequence ID" value="KIS65747"/>
    <property type="gene ID" value="UMAG_06450"/>
</dbReference>
<dbReference type="GeneID" id="23566035"/>
<dbReference type="KEGG" id="uma:UMAG_06450"/>
<dbReference type="VEuPathDB" id="FungiDB:UMAG_06450"/>
<dbReference type="eggNOG" id="KOG1113">
    <property type="taxonomic scope" value="Eukaryota"/>
</dbReference>
<dbReference type="HOGENOM" id="CLU_018310_0_1_1"/>
<dbReference type="InParanoid" id="P49605"/>
<dbReference type="OMA" id="SQTRCVG"/>
<dbReference type="OrthoDB" id="417078at2759"/>
<dbReference type="PHI-base" id="PHI:466"/>
<dbReference type="PHI-base" id="PHI:6078"/>
<dbReference type="Proteomes" id="UP000000561">
    <property type="component" value="Chromosome 23"/>
</dbReference>
<dbReference type="GO" id="GO:0005952">
    <property type="term" value="C:cAMP-dependent protein kinase complex"/>
    <property type="evidence" value="ECO:0000318"/>
    <property type="project" value="GO_Central"/>
</dbReference>
<dbReference type="GO" id="GO:0000785">
    <property type="term" value="C:chromatin"/>
    <property type="evidence" value="ECO:0007669"/>
    <property type="project" value="EnsemblFungi"/>
</dbReference>
<dbReference type="GO" id="GO:0005829">
    <property type="term" value="C:cytosol"/>
    <property type="evidence" value="ECO:0000318"/>
    <property type="project" value="GO_Central"/>
</dbReference>
<dbReference type="GO" id="GO:0005634">
    <property type="term" value="C:nucleus"/>
    <property type="evidence" value="ECO:0000318"/>
    <property type="project" value="GO_Central"/>
</dbReference>
<dbReference type="GO" id="GO:0005886">
    <property type="term" value="C:plasma membrane"/>
    <property type="evidence" value="ECO:0007669"/>
    <property type="project" value="EnsemblFungi"/>
</dbReference>
<dbReference type="GO" id="GO:0030552">
    <property type="term" value="F:cAMP binding"/>
    <property type="evidence" value="ECO:0000318"/>
    <property type="project" value="GO_Central"/>
</dbReference>
<dbReference type="GO" id="GO:0004862">
    <property type="term" value="F:cAMP-dependent protein kinase inhibitor activity"/>
    <property type="evidence" value="ECO:0000318"/>
    <property type="project" value="GO_Central"/>
</dbReference>
<dbReference type="GO" id="GO:0042802">
    <property type="term" value="F:identical protein binding"/>
    <property type="evidence" value="ECO:0007669"/>
    <property type="project" value="EnsemblFungi"/>
</dbReference>
<dbReference type="GO" id="GO:0034236">
    <property type="term" value="F:protein kinase A catalytic subunit binding"/>
    <property type="evidence" value="ECO:0000318"/>
    <property type="project" value="GO_Central"/>
</dbReference>
<dbReference type="GO" id="GO:0007189">
    <property type="term" value="P:adenylate cyclase-activating G protein-coupled receptor signaling pathway"/>
    <property type="evidence" value="ECO:0000318"/>
    <property type="project" value="GO_Central"/>
</dbReference>
<dbReference type="GO" id="GO:0042149">
    <property type="term" value="P:cellular response to glucose starvation"/>
    <property type="evidence" value="ECO:0007669"/>
    <property type="project" value="EnsemblFungi"/>
</dbReference>
<dbReference type="GO" id="GO:0006995">
    <property type="term" value="P:cellular response to nitrogen starvation"/>
    <property type="evidence" value="ECO:0007669"/>
    <property type="project" value="EnsemblFungi"/>
</dbReference>
<dbReference type="GO" id="GO:0046580">
    <property type="term" value="P:negative regulation of Ras protein signal transduction"/>
    <property type="evidence" value="ECO:0007669"/>
    <property type="project" value="EnsemblFungi"/>
</dbReference>
<dbReference type="GO" id="GO:0045944">
    <property type="term" value="P:positive regulation of transcription by RNA polymerase II"/>
    <property type="evidence" value="ECO:0007669"/>
    <property type="project" value="EnsemblFungi"/>
</dbReference>
<dbReference type="GO" id="GO:0097271">
    <property type="term" value="P:protein localization to bud neck"/>
    <property type="evidence" value="ECO:0007669"/>
    <property type="project" value="EnsemblFungi"/>
</dbReference>
<dbReference type="GO" id="GO:0010603">
    <property type="term" value="P:regulation of cytoplasmic mRNA processing body assembly"/>
    <property type="evidence" value="ECO:0007669"/>
    <property type="project" value="EnsemblFungi"/>
</dbReference>
<dbReference type="CDD" id="cd00038">
    <property type="entry name" value="CAP_ED"/>
    <property type="match status" value="2"/>
</dbReference>
<dbReference type="CDD" id="cd12098">
    <property type="entry name" value="DD_R_ScPKA-like"/>
    <property type="match status" value="1"/>
</dbReference>
<dbReference type="FunFam" id="2.60.120.10:FF:000039">
    <property type="entry name" value="cAMP-dependent protein kinase regulatory subunit"/>
    <property type="match status" value="1"/>
</dbReference>
<dbReference type="FunFam" id="2.60.120.10:FF:000230">
    <property type="entry name" value="cAMP-dependent protein kinase regulatory subunit"/>
    <property type="match status" value="1"/>
</dbReference>
<dbReference type="Gene3D" id="1.20.890.10">
    <property type="entry name" value="cAMP-dependent protein kinase regulatory subunit, dimerization-anchoring domain"/>
    <property type="match status" value="1"/>
</dbReference>
<dbReference type="Gene3D" id="2.60.120.10">
    <property type="entry name" value="Jelly Rolls"/>
    <property type="match status" value="2"/>
</dbReference>
<dbReference type="InterPro" id="IPR050503">
    <property type="entry name" value="cAMP-dep_PK_reg_su-like"/>
</dbReference>
<dbReference type="InterPro" id="IPR012198">
    <property type="entry name" value="cAMP_dep_PK_reg_su"/>
</dbReference>
<dbReference type="InterPro" id="IPR003117">
    <property type="entry name" value="cAMP_dep_PK_reg_su_I/II_a/b"/>
</dbReference>
<dbReference type="InterPro" id="IPR018488">
    <property type="entry name" value="cNMP-bd_CS"/>
</dbReference>
<dbReference type="InterPro" id="IPR000595">
    <property type="entry name" value="cNMP-bd_dom"/>
</dbReference>
<dbReference type="InterPro" id="IPR018490">
    <property type="entry name" value="cNMP-bd_dom_sf"/>
</dbReference>
<dbReference type="InterPro" id="IPR014710">
    <property type="entry name" value="RmlC-like_jellyroll"/>
</dbReference>
<dbReference type="PANTHER" id="PTHR11635">
    <property type="entry name" value="CAMP-DEPENDENT PROTEIN KINASE REGULATORY CHAIN"/>
    <property type="match status" value="1"/>
</dbReference>
<dbReference type="PANTHER" id="PTHR11635:SF152">
    <property type="entry name" value="CAMP-DEPENDENT PROTEIN KINASE TYPE I REGULATORY SUBUNIT-RELATED"/>
    <property type="match status" value="1"/>
</dbReference>
<dbReference type="Pfam" id="PF00027">
    <property type="entry name" value="cNMP_binding"/>
    <property type="match status" value="2"/>
</dbReference>
<dbReference type="Pfam" id="PF02197">
    <property type="entry name" value="RIIa"/>
    <property type="match status" value="1"/>
</dbReference>
<dbReference type="PIRSF" id="PIRSF000548">
    <property type="entry name" value="PK_regulatory"/>
    <property type="match status" value="1"/>
</dbReference>
<dbReference type="PRINTS" id="PR00103">
    <property type="entry name" value="CAMPKINASE"/>
</dbReference>
<dbReference type="SMART" id="SM00100">
    <property type="entry name" value="cNMP"/>
    <property type="match status" value="2"/>
</dbReference>
<dbReference type="SMART" id="SM00394">
    <property type="entry name" value="RIIa"/>
    <property type="match status" value="1"/>
</dbReference>
<dbReference type="SUPFAM" id="SSF51206">
    <property type="entry name" value="cAMP-binding domain-like"/>
    <property type="match status" value="2"/>
</dbReference>
<dbReference type="SUPFAM" id="SSF47391">
    <property type="entry name" value="Dimerization-anchoring domain of cAMP-dependent PK regulatory subunit"/>
    <property type="match status" value="1"/>
</dbReference>
<dbReference type="PROSITE" id="PS00888">
    <property type="entry name" value="CNMP_BINDING_1"/>
    <property type="match status" value="2"/>
</dbReference>
<dbReference type="PROSITE" id="PS00889">
    <property type="entry name" value="CNMP_BINDING_2"/>
    <property type="match status" value="2"/>
</dbReference>
<dbReference type="PROSITE" id="PS50042">
    <property type="entry name" value="CNMP_BINDING_3"/>
    <property type="match status" value="2"/>
</dbReference>
<organism>
    <name type="scientific">Mycosarcoma maydis</name>
    <name type="common">Corn smut fungus</name>
    <name type="synonym">Ustilago maydis</name>
    <dbReference type="NCBI Taxonomy" id="5270"/>
    <lineage>
        <taxon>Eukaryota</taxon>
        <taxon>Fungi</taxon>
        <taxon>Dikarya</taxon>
        <taxon>Basidiomycota</taxon>
        <taxon>Ustilaginomycotina</taxon>
        <taxon>Ustilaginomycetes</taxon>
        <taxon>Ustilaginales</taxon>
        <taxon>Ustilaginaceae</taxon>
        <taxon>Mycosarcoma</taxon>
    </lineage>
</organism>
<evidence type="ECO:0000250" key="1"/>
<evidence type="ECO:0000255" key="2"/>
<evidence type="ECO:0000256" key="3">
    <source>
        <dbReference type="SAM" id="MobiDB-lite"/>
    </source>
</evidence>
<evidence type="ECO:0000305" key="4"/>
<keyword id="KW-0114">cAMP</keyword>
<keyword id="KW-0116">cAMP-binding</keyword>
<keyword id="KW-0547">Nucleotide-binding</keyword>
<keyword id="KW-0597">Phosphoprotein</keyword>
<keyword id="KW-1185">Reference proteome</keyword>
<keyword id="KW-0677">Repeat</keyword>
<accession>P49605</accession>
<accession>A0A0D1BUG7</accession>
<accession>Q4P0B3</accession>
<protein>
    <recommendedName>
        <fullName>cAMP-dependent protein kinase regulatory subunit</fullName>
        <shortName>PKA regulatory subunit</shortName>
    </recommendedName>
</protein>
<name>KAPR_MYCMD</name>
<sequence>MSLPSSYTALLNDLNRDVARARPADALQFCANWFNSKLEEQRRAHLASNTNFATTNASTPFSHNSVGPSDIVDFGGAAPGLASPTQRASLFHSDPFAPGAGGGALPVASLAVPMDASQSPDSTPAPATPAAPAAPAAPAAPFSSLGGSGSTSISNAAFIPPTFNLGRRTSVSAESMAPSAANAESDGSPLPKTVIPKSEEQMQRIRGSIGNNLLFRNLEQDQYRDVLLAMKEVKVDANVTVIEQGAQGDYFYVVEFGTLDVYVRSPDAVSEGAPSASALLGDKKVSYGPGSSFGELALLYAQPRAATVLSTSACTLWALDRITFRSILMETNSRRRALYEKFLMDVPLFERLSAAERAKISDSLELREYSRGEAVISQGERGSEFFIIVEGDAEVRKTKQGGEEVVGKLSRGDYFGELALLNNAPRAATVAAAGATDDARLRVVTMSERAFTRLLGPLAGILERHAKETYGDEYSAVHANANADAATSVNSAALARSGADTSFPHPMDSSAKPGEGAWSAPNPFA</sequence>